<keyword id="KW-0227">DNA damage</keyword>
<keyword id="KW-0234">DNA repair</keyword>
<keyword id="KW-1185">Reference proteome</keyword>
<comment type="function">
    <text evidence="1">This protein is involved in the repair of mismatches in DNA. It is required for dam-dependent methyl-directed DNA mismatch repair. May act as a 'molecular matchmaker', a protein that promotes the formation of a stable complex between two or more DNA-binding proteins in an ATP-dependent manner without itself being part of a final effector complex.</text>
</comment>
<comment type="similarity">
    <text evidence="1">Belongs to the DNA mismatch repair MutL/HexB family.</text>
</comment>
<accession>Q1QIP3</accession>
<proteinExistence type="inferred from homology"/>
<reference key="1">
    <citation type="submission" date="2006-03" db="EMBL/GenBank/DDBJ databases">
        <title>Complete sequence of chromosome of Nitrobacter hamburgensis X14.</title>
        <authorList>
            <consortium name="US DOE Joint Genome Institute"/>
            <person name="Copeland A."/>
            <person name="Lucas S."/>
            <person name="Lapidus A."/>
            <person name="Barry K."/>
            <person name="Detter J.C."/>
            <person name="Glavina del Rio T."/>
            <person name="Hammon N."/>
            <person name="Israni S."/>
            <person name="Dalin E."/>
            <person name="Tice H."/>
            <person name="Pitluck S."/>
            <person name="Chain P."/>
            <person name="Malfatti S."/>
            <person name="Shin M."/>
            <person name="Vergez L."/>
            <person name="Schmutz J."/>
            <person name="Larimer F."/>
            <person name="Land M."/>
            <person name="Hauser L."/>
            <person name="Kyrpides N."/>
            <person name="Ivanova N."/>
            <person name="Ward B."/>
            <person name="Arp D."/>
            <person name="Klotz M."/>
            <person name="Stein L."/>
            <person name="O'Mullan G."/>
            <person name="Starkenburg S."/>
            <person name="Sayavedra L."/>
            <person name="Poret-Peterson A.T."/>
            <person name="Gentry M.E."/>
            <person name="Bruce D."/>
            <person name="Richardson P."/>
        </authorList>
    </citation>
    <scope>NUCLEOTIDE SEQUENCE [LARGE SCALE GENOMIC DNA]</scope>
    <source>
        <strain>DSM 10229 / NCIMB 13809 / X14</strain>
    </source>
</reference>
<feature type="chain" id="PRO_1000010049" description="DNA mismatch repair protein MutL">
    <location>
        <begin position="1"/>
        <end position="603"/>
    </location>
</feature>
<organism>
    <name type="scientific">Nitrobacter hamburgensis (strain DSM 10229 / NCIMB 13809 / X14)</name>
    <dbReference type="NCBI Taxonomy" id="323097"/>
    <lineage>
        <taxon>Bacteria</taxon>
        <taxon>Pseudomonadati</taxon>
        <taxon>Pseudomonadota</taxon>
        <taxon>Alphaproteobacteria</taxon>
        <taxon>Hyphomicrobiales</taxon>
        <taxon>Nitrobacteraceae</taxon>
        <taxon>Nitrobacter</taxon>
    </lineage>
</organism>
<dbReference type="EMBL" id="CP000319">
    <property type="protein sequence ID" value="ABE63904.1"/>
    <property type="molecule type" value="Genomic_DNA"/>
</dbReference>
<dbReference type="RefSeq" id="WP_011511560.1">
    <property type="nucleotide sequence ID" value="NC_007964.1"/>
</dbReference>
<dbReference type="SMR" id="Q1QIP3"/>
<dbReference type="STRING" id="323097.Nham_3169"/>
<dbReference type="KEGG" id="nha:Nham_3169"/>
<dbReference type="eggNOG" id="COG0323">
    <property type="taxonomic scope" value="Bacteria"/>
</dbReference>
<dbReference type="HOGENOM" id="CLU_004131_4_2_5"/>
<dbReference type="OrthoDB" id="9763467at2"/>
<dbReference type="Proteomes" id="UP000001953">
    <property type="component" value="Chromosome"/>
</dbReference>
<dbReference type="GO" id="GO:0032300">
    <property type="term" value="C:mismatch repair complex"/>
    <property type="evidence" value="ECO:0007669"/>
    <property type="project" value="InterPro"/>
</dbReference>
<dbReference type="GO" id="GO:0005524">
    <property type="term" value="F:ATP binding"/>
    <property type="evidence" value="ECO:0007669"/>
    <property type="project" value="InterPro"/>
</dbReference>
<dbReference type="GO" id="GO:0016887">
    <property type="term" value="F:ATP hydrolysis activity"/>
    <property type="evidence" value="ECO:0007669"/>
    <property type="project" value="InterPro"/>
</dbReference>
<dbReference type="GO" id="GO:0140664">
    <property type="term" value="F:ATP-dependent DNA damage sensor activity"/>
    <property type="evidence" value="ECO:0007669"/>
    <property type="project" value="InterPro"/>
</dbReference>
<dbReference type="GO" id="GO:0030983">
    <property type="term" value="F:mismatched DNA binding"/>
    <property type="evidence" value="ECO:0007669"/>
    <property type="project" value="InterPro"/>
</dbReference>
<dbReference type="GO" id="GO:0006298">
    <property type="term" value="P:mismatch repair"/>
    <property type="evidence" value="ECO:0007669"/>
    <property type="project" value="UniProtKB-UniRule"/>
</dbReference>
<dbReference type="CDD" id="cd16926">
    <property type="entry name" value="HATPase_MutL-MLH-PMS-like"/>
    <property type="match status" value="1"/>
</dbReference>
<dbReference type="CDD" id="cd00782">
    <property type="entry name" value="MutL_Trans"/>
    <property type="match status" value="1"/>
</dbReference>
<dbReference type="FunFam" id="3.30.565.10:FF:000003">
    <property type="entry name" value="DNA mismatch repair endonuclease MutL"/>
    <property type="match status" value="1"/>
</dbReference>
<dbReference type="Gene3D" id="3.30.230.10">
    <property type="match status" value="1"/>
</dbReference>
<dbReference type="Gene3D" id="3.30.565.10">
    <property type="entry name" value="Histidine kinase-like ATPase, C-terminal domain"/>
    <property type="match status" value="1"/>
</dbReference>
<dbReference type="Gene3D" id="3.30.1540.20">
    <property type="entry name" value="MutL, C-terminal domain, dimerisation subdomain"/>
    <property type="match status" value="1"/>
</dbReference>
<dbReference type="Gene3D" id="3.30.1370.100">
    <property type="entry name" value="MutL, C-terminal domain, regulatory subdomain"/>
    <property type="match status" value="1"/>
</dbReference>
<dbReference type="HAMAP" id="MF_00149">
    <property type="entry name" value="DNA_mis_repair"/>
    <property type="match status" value="1"/>
</dbReference>
<dbReference type="InterPro" id="IPR014762">
    <property type="entry name" value="DNA_mismatch_repair_CS"/>
</dbReference>
<dbReference type="InterPro" id="IPR020667">
    <property type="entry name" value="DNA_mismatch_repair_MutL"/>
</dbReference>
<dbReference type="InterPro" id="IPR013507">
    <property type="entry name" value="DNA_mismatch_S5_2-like"/>
</dbReference>
<dbReference type="InterPro" id="IPR036890">
    <property type="entry name" value="HATPase_C_sf"/>
</dbReference>
<dbReference type="InterPro" id="IPR002099">
    <property type="entry name" value="MutL/Mlh/PMS"/>
</dbReference>
<dbReference type="InterPro" id="IPR038973">
    <property type="entry name" value="MutL/Mlh/Pms-like"/>
</dbReference>
<dbReference type="InterPro" id="IPR014790">
    <property type="entry name" value="MutL_C"/>
</dbReference>
<dbReference type="InterPro" id="IPR042120">
    <property type="entry name" value="MutL_C_dimsub"/>
</dbReference>
<dbReference type="InterPro" id="IPR042121">
    <property type="entry name" value="MutL_C_regsub"/>
</dbReference>
<dbReference type="InterPro" id="IPR037198">
    <property type="entry name" value="MutL_C_sf"/>
</dbReference>
<dbReference type="InterPro" id="IPR020568">
    <property type="entry name" value="Ribosomal_Su5_D2-typ_SF"/>
</dbReference>
<dbReference type="InterPro" id="IPR014721">
    <property type="entry name" value="Ribsml_uS5_D2-typ_fold_subgr"/>
</dbReference>
<dbReference type="NCBIfam" id="TIGR00585">
    <property type="entry name" value="mutl"/>
    <property type="match status" value="1"/>
</dbReference>
<dbReference type="NCBIfam" id="NF000953">
    <property type="entry name" value="PRK00095.2-4"/>
    <property type="match status" value="1"/>
</dbReference>
<dbReference type="PANTHER" id="PTHR10073">
    <property type="entry name" value="DNA MISMATCH REPAIR PROTEIN MLH, PMS, MUTL"/>
    <property type="match status" value="1"/>
</dbReference>
<dbReference type="PANTHER" id="PTHR10073:SF12">
    <property type="entry name" value="DNA MISMATCH REPAIR PROTEIN MLH1"/>
    <property type="match status" value="1"/>
</dbReference>
<dbReference type="Pfam" id="PF01119">
    <property type="entry name" value="DNA_mis_repair"/>
    <property type="match status" value="1"/>
</dbReference>
<dbReference type="Pfam" id="PF13589">
    <property type="entry name" value="HATPase_c_3"/>
    <property type="match status" value="1"/>
</dbReference>
<dbReference type="Pfam" id="PF08676">
    <property type="entry name" value="MutL_C"/>
    <property type="match status" value="1"/>
</dbReference>
<dbReference type="SMART" id="SM01340">
    <property type="entry name" value="DNA_mis_repair"/>
    <property type="match status" value="1"/>
</dbReference>
<dbReference type="SMART" id="SM00853">
    <property type="entry name" value="MutL_C"/>
    <property type="match status" value="1"/>
</dbReference>
<dbReference type="SUPFAM" id="SSF55874">
    <property type="entry name" value="ATPase domain of HSP90 chaperone/DNA topoisomerase II/histidine kinase"/>
    <property type="match status" value="1"/>
</dbReference>
<dbReference type="SUPFAM" id="SSF118116">
    <property type="entry name" value="DNA mismatch repair protein MutL"/>
    <property type="match status" value="1"/>
</dbReference>
<dbReference type="SUPFAM" id="SSF54211">
    <property type="entry name" value="Ribosomal protein S5 domain 2-like"/>
    <property type="match status" value="1"/>
</dbReference>
<dbReference type="PROSITE" id="PS00058">
    <property type="entry name" value="DNA_MISMATCH_REPAIR_1"/>
    <property type="match status" value="1"/>
</dbReference>
<protein>
    <recommendedName>
        <fullName evidence="1">DNA mismatch repair protein MutL</fullName>
    </recommendedName>
</protein>
<evidence type="ECO:0000255" key="1">
    <source>
        <dbReference type="HAMAP-Rule" id="MF_00149"/>
    </source>
</evidence>
<sequence>MPVRQLPETVVNRIAAGEVVERPASVVKELVENAIDAGAGRIDIFTDGGGRRRIGITDDGGGMTKADLALAVDRHATSKLDDEDLLRIRTLGFRGEALPSIGAVAKLGITTRHGSEPHAWSLTVEGGRKSAIVPAALTQGTRVEVSDLFYATPARLKFLKTDRTEAEAIREVVRRLAMARPDIAFTLAGEERAPVTWTAALPGAAGQLTRLGDILGADFRCSAIAVRAERDGVTVEGFAAAPSLTRANALGQYLFVNGRPVRDKLIIGAVRAAYSDYLPRDRHPVVALFVTTAPQEVDANVHPAKTEVRFRNAGLVRALIVHALKEGLAREGRRTAANSDGAVLTAFRPAAVPRPANWDWRQSPASPVGAGPWSGGATAAAFAAPGQTAFDVGAPSADVRSDPNPVADLIDRPLGAARTQIHETYIVTQTRDGLIVVDQHAAHERIVYEKLKAALERDGVQRQILLIPDIVELDEATVEKLIDRAPELEKFGLAIESFGPGAVAVRETPSLLGKTNAAALLRDLAEHMAEWDEALPLERRLMHVAATMACHGSVRAGRILKPEEMNALLREMEDTPNSGQCNHGRPTYVELKLADIEKLFGRR</sequence>
<name>MUTL_NITHX</name>
<gene>
    <name evidence="1" type="primary">mutL</name>
    <name type="ordered locus">Nham_3169</name>
</gene>